<comment type="similarity">
    <text evidence="1">Belongs to the eukaryotic ribosomal protein eL33 family.</text>
</comment>
<gene>
    <name evidence="1" type="primary">rpl35ae</name>
    <name type="ordered locus">APE_2324.1</name>
</gene>
<name>RL35A_AERPE</name>
<dbReference type="EMBL" id="BA000002">
    <property type="protein sequence ID" value="BAA81336.2"/>
    <property type="molecule type" value="Genomic_DNA"/>
</dbReference>
<dbReference type="PIR" id="H72459">
    <property type="entry name" value="H72459"/>
</dbReference>
<dbReference type="RefSeq" id="WP_010866938.1">
    <property type="nucleotide sequence ID" value="NC_000854.2"/>
</dbReference>
<dbReference type="SMR" id="Q9Y9G4"/>
<dbReference type="STRING" id="272557.APE_2324.1"/>
<dbReference type="EnsemblBacteria" id="BAA81336">
    <property type="protein sequence ID" value="BAA81336"/>
    <property type="gene ID" value="APE_2324.1"/>
</dbReference>
<dbReference type="GeneID" id="1445346"/>
<dbReference type="KEGG" id="ape:APE_2324.1"/>
<dbReference type="eggNOG" id="arCOG04304">
    <property type="taxonomic scope" value="Archaea"/>
</dbReference>
<dbReference type="Proteomes" id="UP000002518">
    <property type="component" value="Chromosome"/>
</dbReference>
<dbReference type="GO" id="GO:1990904">
    <property type="term" value="C:ribonucleoprotein complex"/>
    <property type="evidence" value="ECO:0007669"/>
    <property type="project" value="UniProtKB-KW"/>
</dbReference>
<dbReference type="GO" id="GO:0005840">
    <property type="term" value="C:ribosome"/>
    <property type="evidence" value="ECO:0007669"/>
    <property type="project" value="UniProtKB-KW"/>
</dbReference>
<dbReference type="GO" id="GO:0003735">
    <property type="term" value="F:structural constituent of ribosome"/>
    <property type="evidence" value="ECO:0007669"/>
    <property type="project" value="InterPro"/>
</dbReference>
<dbReference type="GO" id="GO:0006412">
    <property type="term" value="P:translation"/>
    <property type="evidence" value="ECO:0007669"/>
    <property type="project" value="UniProtKB-UniRule"/>
</dbReference>
<dbReference type="Gene3D" id="2.40.10.190">
    <property type="entry name" value="translation elongation factor selb, chain A, domain 4"/>
    <property type="match status" value="1"/>
</dbReference>
<dbReference type="HAMAP" id="MF_00573">
    <property type="entry name" value="Ribosomal_eL33"/>
    <property type="match status" value="1"/>
</dbReference>
<dbReference type="InterPro" id="IPR001780">
    <property type="entry name" value="Ribosomal_eL33"/>
</dbReference>
<dbReference type="InterPro" id="IPR038661">
    <property type="entry name" value="Ribosomal_eL33_sf"/>
</dbReference>
<dbReference type="InterPro" id="IPR009000">
    <property type="entry name" value="Transl_B-barrel_sf"/>
</dbReference>
<dbReference type="NCBIfam" id="NF003326">
    <property type="entry name" value="PRK04337.1"/>
    <property type="match status" value="1"/>
</dbReference>
<dbReference type="Pfam" id="PF01247">
    <property type="entry name" value="Ribosomal_L35Ae"/>
    <property type="match status" value="1"/>
</dbReference>
<dbReference type="SUPFAM" id="SSF50447">
    <property type="entry name" value="Translation proteins"/>
    <property type="match status" value="1"/>
</dbReference>
<feature type="chain" id="PRO_0000192809" description="Large ribosomal subunit protein eL33">
    <location>
        <begin position="1"/>
        <end position="94"/>
    </location>
</feature>
<protein>
    <recommendedName>
        <fullName evidence="1">Large ribosomal subunit protein eL33</fullName>
    </recommendedName>
    <alternativeName>
        <fullName evidence="2">50S ribosomal protein L35Ae</fullName>
    </alternativeName>
</protein>
<keyword id="KW-1185">Reference proteome</keyword>
<keyword id="KW-0687">Ribonucleoprotein</keyword>
<keyword id="KW-0689">Ribosomal protein</keyword>
<evidence type="ECO:0000255" key="1">
    <source>
        <dbReference type="HAMAP-Rule" id="MF_00573"/>
    </source>
</evidence>
<evidence type="ECO:0000305" key="2"/>
<sequence>MARARGVVLGYRRGTNTQYPQHALVKLLLDDPRKAGLYVSGIAFYRDRYGNVYKGRVLRLHGRRGGVVVVKFNPPLPGQATGGVVEVVKAGGDG</sequence>
<proteinExistence type="inferred from homology"/>
<accession>Q9Y9G4</accession>
<organism>
    <name type="scientific">Aeropyrum pernix (strain ATCC 700893 / DSM 11879 / JCM 9820 / NBRC 100138 / K1)</name>
    <dbReference type="NCBI Taxonomy" id="272557"/>
    <lineage>
        <taxon>Archaea</taxon>
        <taxon>Thermoproteota</taxon>
        <taxon>Thermoprotei</taxon>
        <taxon>Desulfurococcales</taxon>
        <taxon>Desulfurococcaceae</taxon>
        <taxon>Aeropyrum</taxon>
    </lineage>
</organism>
<reference key="1">
    <citation type="journal article" date="1999" name="DNA Res.">
        <title>Complete genome sequence of an aerobic hyper-thermophilic crenarchaeon, Aeropyrum pernix K1.</title>
        <authorList>
            <person name="Kawarabayasi Y."/>
            <person name="Hino Y."/>
            <person name="Horikawa H."/>
            <person name="Yamazaki S."/>
            <person name="Haikawa Y."/>
            <person name="Jin-no K."/>
            <person name="Takahashi M."/>
            <person name="Sekine M."/>
            <person name="Baba S."/>
            <person name="Ankai A."/>
            <person name="Kosugi H."/>
            <person name="Hosoyama A."/>
            <person name="Fukui S."/>
            <person name="Nagai Y."/>
            <person name="Nishijima K."/>
            <person name="Nakazawa H."/>
            <person name="Takamiya M."/>
            <person name="Masuda S."/>
            <person name="Funahashi T."/>
            <person name="Tanaka T."/>
            <person name="Kudoh Y."/>
            <person name="Yamazaki J."/>
            <person name="Kushida N."/>
            <person name="Oguchi A."/>
            <person name="Aoki K."/>
            <person name="Kubota K."/>
            <person name="Nakamura Y."/>
            <person name="Nomura N."/>
            <person name="Sako Y."/>
            <person name="Kikuchi H."/>
        </authorList>
    </citation>
    <scope>NUCLEOTIDE SEQUENCE [LARGE SCALE GENOMIC DNA]</scope>
    <source>
        <strain>ATCC 700893 / DSM 11879 / JCM 9820 / NBRC 100138 / K1</strain>
    </source>
</reference>